<reference key="1">
    <citation type="journal article" date="2003" name="Genome Res.">
        <title>The secreted protein discovery initiative (SPDI), a large-scale effort to identify novel human secreted and transmembrane proteins: a bioinformatics assessment.</title>
        <authorList>
            <person name="Clark H.F."/>
            <person name="Gurney A.L."/>
            <person name="Abaya E."/>
            <person name="Baker K."/>
            <person name="Baldwin D.T."/>
            <person name="Brush J."/>
            <person name="Chen J."/>
            <person name="Chow B."/>
            <person name="Chui C."/>
            <person name="Crowley C."/>
            <person name="Currell B."/>
            <person name="Deuel B."/>
            <person name="Dowd P."/>
            <person name="Eaton D."/>
            <person name="Foster J.S."/>
            <person name="Grimaldi C."/>
            <person name="Gu Q."/>
            <person name="Hass P.E."/>
            <person name="Heldens S."/>
            <person name="Huang A."/>
            <person name="Kim H.S."/>
            <person name="Klimowski L."/>
            <person name="Jin Y."/>
            <person name="Johnson S."/>
            <person name="Lee J."/>
            <person name="Lewis L."/>
            <person name="Liao D."/>
            <person name="Mark M.R."/>
            <person name="Robbie E."/>
            <person name="Sanchez C."/>
            <person name="Schoenfeld J."/>
            <person name="Seshagiri S."/>
            <person name="Simmons L."/>
            <person name="Singh J."/>
            <person name="Smith V."/>
            <person name="Stinson J."/>
            <person name="Vagts A."/>
            <person name="Vandlen R.L."/>
            <person name="Watanabe C."/>
            <person name="Wieand D."/>
            <person name="Woods K."/>
            <person name="Xie M.-H."/>
            <person name="Yansura D.G."/>
            <person name="Yi S."/>
            <person name="Yu G."/>
            <person name="Yuan J."/>
            <person name="Zhang M."/>
            <person name="Zhang Z."/>
            <person name="Goddard A.D."/>
            <person name="Wood W.I."/>
            <person name="Godowski P.J."/>
            <person name="Gray A.M."/>
        </authorList>
    </citation>
    <scope>NUCLEOTIDE SEQUENCE [LARGE SCALE MRNA]</scope>
</reference>
<reference key="2">
    <citation type="journal article" date="2005" name="DNA Res.">
        <title>Signal sequence and keyword trap in silico for selection of full-length human cDNAs encoding secretion or membrane proteins from oligo-capped cDNA libraries.</title>
        <authorList>
            <person name="Otsuki T."/>
            <person name="Ota T."/>
            <person name="Nishikawa T."/>
            <person name="Hayashi K."/>
            <person name="Suzuki Y."/>
            <person name="Yamamoto J."/>
            <person name="Wakamatsu A."/>
            <person name="Kimura K."/>
            <person name="Sakamoto K."/>
            <person name="Hatano N."/>
            <person name="Kawai Y."/>
            <person name="Ishii S."/>
            <person name="Saito K."/>
            <person name="Kojima S."/>
            <person name="Sugiyama T."/>
            <person name="Ono T."/>
            <person name="Okano K."/>
            <person name="Yoshikawa Y."/>
            <person name="Aotsuka S."/>
            <person name="Sasaki N."/>
            <person name="Hattori A."/>
            <person name="Okumura K."/>
            <person name="Nagai K."/>
            <person name="Sugano S."/>
            <person name="Isogai T."/>
        </authorList>
    </citation>
    <scope>NUCLEOTIDE SEQUENCE [LARGE SCALE MRNA]</scope>
    <source>
        <tissue>Teratocarcinoma</tissue>
    </source>
</reference>
<reference key="3">
    <citation type="journal article" date="2001" name="Nature">
        <title>The DNA sequence and comparative analysis of human chromosome 20.</title>
        <authorList>
            <person name="Deloukas P."/>
            <person name="Matthews L.H."/>
            <person name="Ashurst J.L."/>
            <person name="Burton J."/>
            <person name="Gilbert J.G.R."/>
            <person name="Jones M."/>
            <person name="Stavrides G."/>
            <person name="Almeida J.P."/>
            <person name="Babbage A.K."/>
            <person name="Bagguley C.L."/>
            <person name="Bailey J."/>
            <person name="Barlow K.F."/>
            <person name="Bates K.N."/>
            <person name="Beard L.M."/>
            <person name="Beare D.M."/>
            <person name="Beasley O.P."/>
            <person name="Bird C.P."/>
            <person name="Blakey S.E."/>
            <person name="Bridgeman A.M."/>
            <person name="Brown A.J."/>
            <person name="Buck D."/>
            <person name="Burrill W.D."/>
            <person name="Butler A.P."/>
            <person name="Carder C."/>
            <person name="Carter N.P."/>
            <person name="Chapman J.C."/>
            <person name="Clamp M."/>
            <person name="Clark G."/>
            <person name="Clark L.N."/>
            <person name="Clark S.Y."/>
            <person name="Clee C.M."/>
            <person name="Clegg S."/>
            <person name="Cobley V.E."/>
            <person name="Collier R.E."/>
            <person name="Connor R.E."/>
            <person name="Corby N.R."/>
            <person name="Coulson A."/>
            <person name="Coville G.J."/>
            <person name="Deadman R."/>
            <person name="Dhami P.D."/>
            <person name="Dunn M."/>
            <person name="Ellington A.G."/>
            <person name="Frankland J.A."/>
            <person name="Fraser A."/>
            <person name="French L."/>
            <person name="Garner P."/>
            <person name="Grafham D.V."/>
            <person name="Griffiths C."/>
            <person name="Griffiths M.N.D."/>
            <person name="Gwilliam R."/>
            <person name="Hall R.E."/>
            <person name="Hammond S."/>
            <person name="Harley J.L."/>
            <person name="Heath P.D."/>
            <person name="Ho S."/>
            <person name="Holden J.L."/>
            <person name="Howden P.J."/>
            <person name="Huckle E."/>
            <person name="Hunt A.R."/>
            <person name="Hunt S.E."/>
            <person name="Jekosch K."/>
            <person name="Johnson C.M."/>
            <person name="Johnson D."/>
            <person name="Kay M.P."/>
            <person name="Kimberley A.M."/>
            <person name="King A."/>
            <person name="Knights A."/>
            <person name="Laird G.K."/>
            <person name="Lawlor S."/>
            <person name="Lehvaeslaiho M.H."/>
            <person name="Leversha M.A."/>
            <person name="Lloyd C."/>
            <person name="Lloyd D.M."/>
            <person name="Lovell J.D."/>
            <person name="Marsh V.L."/>
            <person name="Martin S.L."/>
            <person name="McConnachie L.J."/>
            <person name="McLay K."/>
            <person name="McMurray A.A."/>
            <person name="Milne S.A."/>
            <person name="Mistry D."/>
            <person name="Moore M.J.F."/>
            <person name="Mullikin J.C."/>
            <person name="Nickerson T."/>
            <person name="Oliver K."/>
            <person name="Parker A."/>
            <person name="Patel R."/>
            <person name="Pearce T.A.V."/>
            <person name="Peck A.I."/>
            <person name="Phillimore B.J.C.T."/>
            <person name="Prathalingam S.R."/>
            <person name="Plumb R.W."/>
            <person name="Ramsay H."/>
            <person name="Rice C.M."/>
            <person name="Ross M.T."/>
            <person name="Scott C.E."/>
            <person name="Sehra H.K."/>
            <person name="Shownkeen R."/>
            <person name="Sims S."/>
            <person name="Skuce C.D."/>
            <person name="Smith M.L."/>
            <person name="Soderlund C."/>
            <person name="Steward C.A."/>
            <person name="Sulston J.E."/>
            <person name="Swann R.M."/>
            <person name="Sycamore N."/>
            <person name="Taylor R."/>
            <person name="Tee L."/>
            <person name="Thomas D.W."/>
            <person name="Thorpe A."/>
            <person name="Tracey A."/>
            <person name="Tromans A.C."/>
            <person name="Vaudin M."/>
            <person name="Wall M."/>
            <person name="Wallis J.M."/>
            <person name="Whitehead S.L."/>
            <person name="Whittaker P."/>
            <person name="Willey D.L."/>
            <person name="Williams L."/>
            <person name="Williams S.A."/>
            <person name="Wilming L."/>
            <person name="Wray P.W."/>
            <person name="Hubbard T."/>
            <person name="Durbin R.M."/>
            <person name="Bentley D.R."/>
            <person name="Beck S."/>
            <person name="Rogers J."/>
        </authorList>
    </citation>
    <scope>NUCLEOTIDE SEQUENCE [LARGE SCALE GENOMIC DNA]</scope>
</reference>
<reference key="4">
    <citation type="journal article" date="2004" name="Genome Res.">
        <title>The status, quality, and expansion of the NIH full-length cDNA project: the Mammalian Gene Collection (MGC).</title>
        <authorList>
            <consortium name="The MGC Project Team"/>
        </authorList>
    </citation>
    <scope>NUCLEOTIDE SEQUENCE [LARGE SCALE MRNA]</scope>
    <scope>VARIANT ARG-303</scope>
    <source>
        <tissue>Brain</tissue>
    </source>
</reference>
<reference key="5">
    <citation type="submission" date="1999-09" db="EMBL/GenBank/DDBJ databases">
        <authorList>
            <person name="Stavrides G.S."/>
            <person name="Huckle E.J."/>
            <person name="Deloukas P."/>
        </authorList>
    </citation>
    <scope>NUCLEOTIDE SEQUENCE [MRNA] OF 88-349</scope>
</reference>
<reference key="6">
    <citation type="journal article" date="1999" name="DNA Res.">
        <title>Characterization of cDNA clones selected by the GeneMark analysis from size-fractionated cDNA libraries from human brain.</title>
        <authorList>
            <person name="Hirosawa M."/>
            <person name="Nagase T."/>
            <person name="Ishikawa K."/>
            <person name="Kikuno R."/>
            <person name="Nomura N."/>
            <person name="Ohara O."/>
        </authorList>
    </citation>
    <scope>NUCLEOTIDE SEQUENCE [LARGE SCALE MRNA] OF 235-349</scope>
    <source>
        <tissue>Brain</tissue>
    </source>
</reference>
<reference key="7">
    <citation type="journal article" date="2006" name="Cell">
        <title>Global, in vivo, and site-specific phosphorylation dynamics in signaling networks.</title>
        <authorList>
            <person name="Olsen J.V."/>
            <person name="Blagoev B."/>
            <person name="Gnad F."/>
            <person name="Macek B."/>
            <person name="Kumar C."/>
            <person name="Mortensen P."/>
            <person name="Mann M."/>
        </authorList>
    </citation>
    <scope>PHOSPHORYLATION [LARGE SCALE ANALYSIS] AT SER-251 AND SER-259</scope>
    <scope>IDENTIFICATION BY MASS SPECTROMETRY [LARGE SCALE ANALYSIS]</scope>
    <source>
        <tissue>Cervix carcinoma</tissue>
    </source>
</reference>
<reference key="8">
    <citation type="journal article" date="2010" name="Sci. Signal.">
        <title>Quantitative phosphoproteomics reveals widespread full phosphorylation site occupancy during mitosis.</title>
        <authorList>
            <person name="Olsen J.V."/>
            <person name="Vermeulen M."/>
            <person name="Santamaria A."/>
            <person name="Kumar C."/>
            <person name="Miller M.L."/>
            <person name="Jensen L.J."/>
            <person name="Gnad F."/>
            <person name="Cox J."/>
            <person name="Jensen T.S."/>
            <person name="Nigg E.A."/>
            <person name="Brunak S."/>
            <person name="Mann M."/>
        </authorList>
    </citation>
    <scope>PHOSPHORYLATION [LARGE SCALE ANALYSIS] AT SER-251 AND SER-259</scope>
    <scope>IDENTIFICATION BY MASS SPECTROMETRY [LARGE SCALE ANALYSIS]</scope>
    <source>
        <tissue>Cervix carcinoma</tissue>
    </source>
</reference>
<reference key="9">
    <citation type="journal article" date="2011" name="BMC Syst. Biol.">
        <title>Initial characterization of the human central proteome.</title>
        <authorList>
            <person name="Burkard T.R."/>
            <person name="Planyavsky M."/>
            <person name="Kaupe I."/>
            <person name="Breitwieser F.P."/>
            <person name="Buerckstuemmer T."/>
            <person name="Bennett K.L."/>
            <person name="Superti-Furga G."/>
            <person name="Colinge J."/>
        </authorList>
    </citation>
    <scope>IDENTIFICATION BY MASS SPECTROMETRY [LARGE SCALE ANALYSIS]</scope>
</reference>
<reference key="10">
    <citation type="journal article" date="2012" name="EMBO J.">
        <title>Palmitoylated TMX and calnexin target to the mitochondria-associated membrane.</title>
        <authorList>
            <person name="Lynes E.M."/>
            <person name="Bui M."/>
            <person name="Yap M.C."/>
            <person name="Benson M.D."/>
            <person name="Schneider B."/>
            <person name="Ellgaard L."/>
            <person name="Berthiaume L.G."/>
            <person name="Simmen T."/>
        </authorList>
    </citation>
    <scope>SUBCELLULAR LOCATION</scope>
</reference>
<reference key="11">
    <citation type="journal article" date="2014" name="J. Proteomics">
        <title>An enzyme assisted RP-RPLC approach for in-depth analysis of human liver phosphoproteome.</title>
        <authorList>
            <person name="Bian Y."/>
            <person name="Song C."/>
            <person name="Cheng K."/>
            <person name="Dong M."/>
            <person name="Wang F."/>
            <person name="Huang J."/>
            <person name="Sun D."/>
            <person name="Wang L."/>
            <person name="Ye M."/>
            <person name="Zou H."/>
        </authorList>
    </citation>
    <scope>IDENTIFICATION BY MASS SPECTROMETRY [LARGE SCALE ANALYSIS]</scope>
    <source>
        <tissue>Liver</tissue>
    </source>
</reference>
<reference key="12">
    <citation type="journal article" date="2015" name="Proteomics">
        <title>N-terminome analysis of the human mitochondrial proteome.</title>
        <authorList>
            <person name="Vaca Jacome A.S."/>
            <person name="Rabilloud T."/>
            <person name="Schaeffer-Reiss C."/>
            <person name="Rompais M."/>
            <person name="Ayoub D."/>
            <person name="Lane L."/>
            <person name="Bairoch A."/>
            <person name="Van Dorsselaer A."/>
            <person name="Carapito C."/>
        </authorList>
    </citation>
    <scope>IDENTIFICATION BY MASS SPECTROMETRY [LARGE SCALE ANALYSIS]</scope>
</reference>
<comment type="subcellular location">
    <subcellularLocation>
        <location evidence="1">Nucleus inner membrane</location>
        <topology evidence="3">Single-pass type I membrane protein</topology>
    </subcellularLocation>
    <subcellularLocation>
        <location evidence="7">Endoplasmic reticulum membrane</location>
        <topology evidence="3">Single-pass type I membrane protein</topology>
    </subcellularLocation>
</comment>
<comment type="sequence caution" evidence="8">
    <conflict type="erroneous initiation">
        <sequence resource="EMBL-CDS" id="CAB56344"/>
    </conflict>
</comment>
<organism>
    <name type="scientific">Homo sapiens</name>
    <name type="common">Human</name>
    <dbReference type="NCBI Taxonomy" id="9606"/>
    <lineage>
        <taxon>Eukaryota</taxon>
        <taxon>Metazoa</taxon>
        <taxon>Chordata</taxon>
        <taxon>Craniata</taxon>
        <taxon>Vertebrata</taxon>
        <taxon>Euteleostomi</taxon>
        <taxon>Mammalia</taxon>
        <taxon>Eutheria</taxon>
        <taxon>Euarchontoglires</taxon>
        <taxon>Primates</taxon>
        <taxon>Haplorrhini</taxon>
        <taxon>Catarrhini</taxon>
        <taxon>Hominidae</taxon>
        <taxon>Homo</taxon>
    </lineage>
</organism>
<gene>
    <name type="primary">TMX4</name>
    <name type="synonym">KIAA1162</name>
    <name type="synonym">TXNDC13</name>
    <name type="ORF">PSEC0095</name>
    <name type="ORF">UNQ475/PRO938</name>
</gene>
<dbReference type="EMBL" id="AY359004">
    <property type="protein sequence ID" value="AAQ89363.1"/>
    <property type="molecule type" value="mRNA"/>
</dbReference>
<dbReference type="EMBL" id="AK074838">
    <property type="protein sequence ID" value="BAC11237.1"/>
    <property type="molecule type" value="mRNA"/>
</dbReference>
<dbReference type="EMBL" id="AK075404">
    <property type="protein sequence ID" value="BAC11599.1"/>
    <property type="molecule type" value="mRNA"/>
</dbReference>
<dbReference type="EMBL" id="AL021396">
    <property type="status" value="NOT_ANNOTATED_CDS"/>
    <property type="molecule type" value="Genomic_DNA"/>
</dbReference>
<dbReference type="EMBL" id="BC033787">
    <property type="protein sequence ID" value="AAH33787.1"/>
    <property type="molecule type" value="mRNA"/>
</dbReference>
<dbReference type="EMBL" id="AL118494">
    <property type="protein sequence ID" value="CAB56344.1"/>
    <property type="status" value="ALT_INIT"/>
    <property type="molecule type" value="mRNA"/>
</dbReference>
<dbReference type="EMBL" id="AB032988">
    <property type="protein sequence ID" value="BAA86476.1"/>
    <property type="molecule type" value="mRNA"/>
</dbReference>
<dbReference type="CCDS" id="CCDS13101.1"/>
<dbReference type="RefSeq" id="NP_066979.2">
    <property type="nucleotide sequence ID" value="NM_021156.3"/>
</dbReference>
<dbReference type="SMR" id="Q9H1E5"/>
<dbReference type="BioGRID" id="121120">
    <property type="interactions" value="85"/>
</dbReference>
<dbReference type="FunCoup" id="Q9H1E5">
    <property type="interactions" value="786"/>
</dbReference>
<dbReference type="IntAct" id="Q9H1E5">
    <property type="interactions" value="43"/>
</dbReference>
<dbReference type="MINT" id="Q9H1E5"/>
<dbReference type="STRING" id="9606.ENSP00000246024"/>
<dbReference type="GlyConnect" id="1802">
    <property type="glycosylation" value="1 N-Linked glycan (1 site)"/>
</dbReference>
<dbReference type="GlyCosmos" id="Q9H1E5">
    <property type="glycosylation" value="1 site, 1 glycan"/>
</dbReference>
<dbReference type="GlyGen" id="Q9H1E5">
    <property type="glycosylation" value="2 sites, 5 N-linked glycans (1 site), 1 O-linked glycan (1 site)"/>
</dbReference>
<dbReference type="iPTMnet" id="Q9H1E5"/>
<dbReference type="PhosphoSitePlus" id="Q9H1E5"/>
<dbReference type="SwissPalm" id="Q9H1E5"/>
<dbReference type="BioMuta" id="TMX4"/>
<dbReference type="DMDM" id="30173124"/>
<dbReference type="CPTAC" id="CPTAC-1512"/>
<dbReference type="jPOST" id="Q9H1E5"/>
<dbReference type="MassIVE" id="Q9H1E5"/>
<dbReference type="PaxDb" id="9606-ENSP00000246024"/>
<dbReference type="PeptideAtlas" id="Q9H1E5"/>
<dbReference type="ProteomicsDB" id="80406"/>
<dbReference type="Pumba" id="Q9H1E5"/>
<dbReference type="Antibodypedia" id="610">
    <property type="antibodies" value="105 antibodies from 24 providers"/>
</dbReference>
<dbReference type="DNASU" id="56255"/>
<dbReference type="Ensembl" id="ENST00000246024.7">
    <property type="protein sequence ID" value="ENSP00000246024.2"/>
    <property type="gene ID" value="ENSG00000125827.9"/>
</dbReference>
<dbReference type="GeneID" id="56255"/>
<dbReference type="KEGG" id="hsa:56255"/>
<dbReference type="MANE-Select" id="ENST00000246024.7">
    <property type="protein sequence ID" value="ENSP00000246024.2"/>
    <property type="RefSeq nucleotide sequence ID" value="NM_021156.4"/>
    <property type="RefSeq protein sequence ID" value="NP_066979.2"/>
</dbReference>
<dbReference type="UCSC" id="uc002wmx.2">
    <property type="organism name" value="human"/>
</dbReference>
<dbReference type="AGR" id="HGNC:25237"/>
<dbReference type="CTD" id="56255"/>
<dbReference type="DisGeNET" id="56255"/>
<dbReference type="GeneCards" id="TMX4"/>
<dbReference type="HGNC" id="HGNC:25237">
    <property type="gene designation" value="TMX4"/>
</dbReference>
<dbReference type="HPA" id="ENSG00000125827">
    <property type="expression patterns" value="Low tissue specificity"/>
</dbReference>
<dbReference type="neXtProt" id="NX_Q9H1E5"/>
<dbReference type="OpenTargets" id="ENSG00000125827"/>
<dbReference type="PharmGKB" id="PA164726669"/>
<dbReference type="VEuPathDB" id="HostDB:ENSG00000125827"/>
<dbReference type="eggNOG" id="KOG0913">
    <property type="taxonomic scope" value="Eukaryota"/>
</dbReference>
<dbReference type="GeneTree" id="ENSGT00940000160301"/>
<dbReference type="HOGENOM" id="CLU_069292_1_0_1"/>
<dbReference type="InParanoid" id="Q9H1E5"/>
<dbReference type="OMA" id="CGSNWSL"/>
<dbReference type="OrthoDB" id="7869097at2759"/>
<dbReference type="PAN-GO" id="Q9H1E5">
    <property type="GO annotations" value="2 GO annotations based on evolutionary models"/>
</dbReference>
<dbReference type="PhylomeDB" id="Q9H1E5"/>
<dbReference type="TreeFam" id="TF106376"/>
<dbReference type="PathwayCommons" id="Q9H1E5"/>
<dbReference type="SignaLink" id="Q9H1E5"/>
<dbReference type="BioGRID-ORCS" id="56255">
    <property type="hits" value="13 hits in 1161 CRISPR screens"/>
</dbReference>
<dbReference type="ChiTaRS" id="TMX4">
    <property type="organism name" value="human"/>
</dbReference>
<dbReference type="GeneWiki" id="TMX4"/>
<dbReference type="GenomeRNAi" id="56255"/>
<dbReference type="Pharos" id="Q9H1E5">
    <property type="development level" value="Tbio"/>
</dbReference>
<dbReference type="PRO" id="PR:Q9H1E5"/>
<dbReference type="Proteomes" id="UP000005640">
    <property type="component" value="Chromosome 20"/>
</dbReference>
<dbReference type="RNAct" id="Q9H1E5">
    <property type="molecule type" value="protein"/>
</dbReference>
<dbReference type="Bgee" id="ENSG00000125827">
    <property type="expression patterns" value="Expressed in germinal epithelium of ovary and 216 other cell types or tissues"/>
</dbReference>
<dbReference type="ExpressionAtlas" id="Q9H1E5">
    <property type="expression patterns" value="baseline and differential"/>
</dbReference>
<dbReference type="GO" id="GO:0012505">
    <property type="term" value="C:endomembrane system"/>
    <property type="evidence" value="ECO:0000318"/>
    <property type="project" value="GO_Central"/>
</dbReference>
<dbReference type="GO" id="GO:0005783">
    <property type="term" value="C:endoplasmic reticulum"/>
    <property type="evidence" value="ECO:0000314"/>
    <property type="project" value="UniProtKB"/>
</dbReference>
<dbReference type="GO" id="GO:0005789">
    <property type="term" value="C:endoplasmic reticulum membrane"/>
    <property type="evidence" value="ECO:0007669"/>
    <property type="project" value="UniProtKB-SubCell"/>
</dbReference>
<dbReference type="GO" id="GO:0005637">
    <property type="term" value="C:nuclear inner membrane"/>
    <property type="evidence" value="ECO:0000250"/>
    <property type="project" value="UniProtKB"/>
</dbReference>
<dbReference type="GO" id="GO:0015036">
    <property type="term" value="F:disulfide oxidoreductase activity"/>
    <property type="evidence" value="ECO:0000318"/>
    <property type="project" value="GO_Central"/>
</dbReference>
<dbReference type="CDD" id="cd02994">
    <property type="entry name" value="PDI_a_TMX"/>
    <property type="match status" value="1"/>
</dbReference>
<dbReference type="Gene3D" id="3.40.30.10">
    <property type="entry name" value="Glutaredoxin"/>
    <property type="match status" value="1"/>
</dbReference>
<dbReference type="InterPro" id="IPR036249">
    <property type="entry name" value="Thioredoxin-like_sf"/>
</dbReference>
<dbReference type="InterPro" id="IPR017937">
    <property type="entry name" value="Thioredoxin_CS"/>
</dbReference>
<dbReference type="InterPro" id="IPR013766">
    <property type="entry name" value="Thioredoxin_domain"/>
</dbReference>
<dbReference type="InterPro" id="IPR052454">
    <property type="entry name" value="TMX_domain-containing"/>
</dbReference>
<dbReference type="PANTHER" id="PTHR46107">
    <property type="entry name" value="DUMPY: SHORTER THAN WILD-TYPE"/>
    <property type="match status" value="1"/>
</dbReference>
<dbReference type="PANTHER" id="PTHR46107:SF1">
    <property type="entry name" value="THIOREDOXIN-RELATED TRANSMEMBRANE PROTEIN 4"/>
    <property type="match status" value="1"/>
</dbReference>
<dbReference type="Pfam" id="PF00085">
    <property type="entry name" value="Thioredoxin"/>
    <property type="match status" value="1"/>
</dbReference>
<dbReference type="SUPFAM" id="SSF52833">
    <property type="entry name" value="Thioredoxin-like"/>
    <property type="match status" value="1"/>
</dbReference>
<dbReference type="PROSITE" id="PS00194">
    <property type="entry name" value="THIOREDOXIN_1"/>
    <property type="match status" value="1"/>
</dbReference>
<dbReference type="PROSITE" id="PS51352">
    <property type="entry name" value="THIOREDOXIN_2"/>
    <property type="match status" value="1"/>
</dbReference>
<accession>Q9H1E5</accession>
<accession>Q8N4P7</accession>
<accession>Q8NCC1</accession>
<accession>Q9UJA1</accession>
<accession>Q9ULQ8</accession>
<protein>
    <recommendedName>
        <fullName>Thioredoxin-related transmembrane protein 4</fullName>
    </recommendedName>
    <alternativeName>
        <fullName>Thioredoxin domain-containing protein 13</fullName>
    </alternativeName>
</protein>
<feature type="signal peptide" evidence="3">
    <location>
        <begin position="1"/>
        <end position="23"/>
    </location>
</feature>
<feature type="chain" id="PRO_0000034191" description="Thioredoxin-related transmembrane protein 4">
    <location>
        <begin position="24"/>
        <end position="349"/>
    </location>
</feature>
<feature type="transmembrane region" description="Helical" evidence="3">
    <location>
        <begin position="190"/>
        <end position="210"/>
    </location>
</feature>
<feature type="domain" description="Thioredoxin" evidence="4">
    <location>
        <begin position="30"/>
        <end position="137"/>
    </location>
</feature>
<feature type="region of interest" description="Disordered" evidence="5">
    <location>
        <begin position="225"/>
        <end position="349"/>
    </location>
</feature>
<feature type="compositionally biased region" description="Basic and acidic residues" evidence="5">
    <location>
        <begin position="225"/>
        <end position="240"/>
    </location>
</feature>
<feature type="compositionally biased region" description="Acidic residues" evidence="5">
    <location>
        <begin position="242"/>
        <end position="284"/>
    </location>
</feature>
<feature type="compositionally biased region" description="Acidic residues" evidence="5">
    <location>
        <begin position="312"/>
        <end position="321"/>
    </location>
</feature>
<feature type="compositionally biased region" description="Basic and acidic residues" evidence="5">
    <location>
        <begin position="335"/>
        <end position="349"/>
    </location>
</feature>
<feature type="active site" description="Nucleophile" evidence="2">
    <location>
        <position position="64"/>
    </location>
</feature>
<feature type="active site" description="Nucleophile" evidence="2">
    <location>
        <position position="67"/>
    </location>
</feature>
<feature type="modified residue" description="Phosphoserine" evidence="9 10">
    <location>
        <position position="251"/>
    </location>
</feature>
<feature type="modified residue" description="Phosphoserine" evidence="9 10">
    <location>
        <position position="259"/>
    </location>
</feature>
<feature type="disulfide bond" description="Redox-active" evidence="4">
    <location>
        <begin position="64"/>
        <end position="67"/>
    </location>
</feature>
<feature type="sequence variant" id="VAR_052578" description="In dbSNP:rs1135711.">
    <original>Y</original>
    <variation>C</variation>
    <location>
        <position position="215"/>
    </location>
</feature>
<feature type="sequence variant" id="VAR_052579" description="In dbSNP:rs2076015." evidence="6">
    <original>G</original>
    <variation>R</variation>
    <location>
        <position position="303"/>
    </location>
</feature>
<feature type="sequence conflict" description="In Ref. 2; BAC11237." evidence="8" ref="2">
    <original>V</original>
    <variation>E</variation>
    <location>
        <position position="289"/>
    </location>
</feature>
<keyword id="KW-1015">Disulfide bond</keyword>
<keyword id="KW-0249">Electron transport</keyword>
<keyword id="KW-0256">Endoplasmic reticulum</keyword>
<keyword id="KW-0472">Membrane</keyword>
<keyword id="KW-0539">Nucleus</keyword>
<keyword id="KW-0597">Phosphoprotein</keyword>
<keyword id="KW-1267">Proteomics identification</keyword>
<keyword id="KW-0676">Redox-active center</keyword>
<keyword id="KW-1185">Reference proteome</keyword>
<keyword id="KW-0732">Signal</keyword>
<keyword id="KW-0812">Transmembrane</keyword>
<keyword id="KW-1133">Transmembrane helix</keyword>
<keyword id="KW-0813">Transport</keyword>
<sequence>MAGGRCGPQLTALLAAWIAAVAATAGPEEAALPPEQSRVQPMTASNWTLVMEGEWMLKFYAPWCPSCQQTDSEWEAFAKNGEILQISVGKVDVIQEPGLSGRFFVTTLPAFFHAKDGIFRRYRGPGIFEDLQNYILEKKWQSVEPLTGWKSPASLTMSGMAGLFSISGKIWHLHNYFTVTLGIPAWCSYVFFVIATLVFGLFMGLVLVVISECFYVPLPRHLSERSEQNRRSEEAHRAEQLQDAEEEKDDSNEEENKDSLVDDEEEKEDLGDEDEAEEEEEEDNLAAGVDEERSEANDQGPPGEDGVTREEVEPEEAEEGISEQPCPADTEVVEDSLRQRKSQHADKGL</sequence>
<proteinExistence type="evidence at protein level"/>
<evidence type="ECO:0000250" key="1">
    <source>
        <dbReference type="UniProtKB" id="Q8C0L0"/>
    </source>
</evidence>
<evidence type="ECO:0000250" key="2">
    <source>
        <dbReference type="UniProtKB" id="Q9H3N1"/>
    </source>
</evidence>
<evidence type="ECO:0000255" key="3"/>
<evidence type="ECO:0000255" key="4">
    <source>
        <dbReference type="PROSITE-ProRule" id="PRU00691"/>
    </source>
</evidence>
<evidence type="ECO:0000256" key="5">
    <source>
        <dbReference type="SAM" id="MobiDB-lite"/>
    </source>
</evidence>
<evidence type="ECO:0000269" key="6">
    <source>
    </source>
</evidence>
<evidence type="ECO:0000269" key="7">
    <source>
    </source>
</evidence>
<evidence type="ECO:0000305" key="8"/>
<evidence type="ECO:0007744" key="9">
    <source>
    </source>
</evidence>
<evidence type="ECO:0007744" key="10">
    <source>
    </source>
</evidence>
<name>TMX4_HUMAN</name>